<organism>
    <name type="scientific">Mesomycoplasma hyopneumoniae (strain 7448)</name>
    <name type="common">Mycoplasma hyopneumoniae</name>
    <dbReference type="NCBI Taxonomy" id="262722"/>
    <lineage>
        <taxon>Bacteria</taxon>
        <taxon>Bacillati</taxon>
        <taxon>Mycoplasmatota</taxon>
        <taxon>Mycoplasmoidales</taxon>
        <taxon>Metamycoplasmataceae</taxon>
        <taxon>Mesomycoplasma</taxon>
    </lineage>
</organism>
<reference key="1">
    <citation type="journal article" date="2005" name="J. Bacteriol.">
        <title>Swine and poultry pathogens: the complete genome sequences of two strains of Mycoplasma hyopneumoniae and a strain of Mycoplasma synoviae.</title>
        <authorList>
            <person name="Vasconcelos A.T.R."/>
            <person name="Ferreira H.B."/>
            <person name="Bizarro C.V."/>
            <person name="Bonatto S.L."/>
            <person name="Carvalho M.O."/>
            <person name="Pinto P.M."/>
            <person name="Almeida D.F."/>
            <person name="Almeida L.G.P."/>
            <person name="Almeida R."/>
            <person name="Alves-Junior L."/>
            <person name="Assuncao E.N."/>
            <person name="Azevedo V.A.C."/>
            <person name="Bogo M.R."/>
            <person name="Brigido M.M."/>
            <person name="Brocchi M."/>
            <person name="Burity H.A."/>
            <person name="Camargo A.A."/>
            <person name="Camargo S.S."/>
            <person name="Carepo M.S."/>
            <person name="Carraro D.M."/>
            <person name="de Mattos Cascardo J.C."/>
            <person name="Castro L.A."/>
            <person name="Cavalcanti G."/>
            <person name="Chemale G."/>
            <person name="Collevatti R.G."/>
            <person name="Cunha C.W."/>
            <person name="Dallagiovanna B."/>
            <person name="Dambros B.P."/>
            <person name="Dellagostin O.A."/>
            <person name="Falcao C."/>
            <person name="Fantinatti-Garboggini F."/>
            <person name="Felipe M.S.S."/>
            <person name="Fiorentin L."/>
            <person name="Franco G.R."/>
            <person name="Freitas N.S.A."/>
            <person name="Frias D."/>
            <person name="Grangeiro T.B."/>
            <person name="Grisard E.C."/>
            <person name="Guimaraes C.T."/>
            <person name="Hungria M."/>
            <person name="Jardim S.N."/>
            <person name="Krieger M.A."/>
            <person name="Laurino J.P."/>
            <person name="Lima L.F.A."/>
            <person name="Lopes M.I."/>
            <person name="Loreto E.L.S."/>
            <person name="Madeira H.M.F."/>
            <person name="Manfio G.P."/>
            <person name="Maranhao A.Q."/>
            <person name="Martinkovics C.T."/>
            <person name="Medeiros S.R.B."/>
            <person name="Moreira M.A.M."/>
            <person name="Neiva M."/>
            <person name="Ramalho-Neto C.E."/>
            <person name="Nicolas M.F."/>
            <person name="Oliveira S.C."/>
            <person name="Paixao R.F.C."/>
            <person name="Pedrosa F.O."/>
            <person name="Pena S.D.J."/>
            <person name="Pereira M."/>
            <person name="Pereira-Ferrari L."/>
            <person name="Piffer I."/>
            <person name="Pinto L.S."/>
            <person name="Potrich D.P."/>
            <person name="Salim A.C.M."/>
            <person name="Santos F.R."/>
            <person name="Schmitt R."/>
            <person name="Schneider M.P.C."/>
            <person name="Schrank A."/>
            <person name="Schrank I.S."/>
            <person name="Schuck A.F."/>
            <person name="Seuanez H.N."/>
            <person name="Silva D.W."/>
            <person name="Silva R."/>
            <person name="Silva S.C."/>
            <person name="Soares C.M.A."/>
            <person name="Souza K.R.L."/>
            <person name="Souza R.C."/>
            <person name="Staats C.C."/>
            <person name="Steffens M.B.R."/>
            <person name="Teixeira S.M.R."/>
            <person name="Urmenyi T.P."/>
            <person name="Vainstein M.H."/>
            <person name="Zuccherato L.W."/>
            <person name="Simpson A.J.G."/>
            <person name="Zaha A."/>
        </authorList>
    </citation>
    <scope>NUCLEOTIDE SEQUENCE [LARGE SCALE GENOMIC DNA]</scope>
    <source>
        <strain>7448</strain>
    </source>
</reference>
<keyword id="KW-0067">ATP-binding</keyword>
<keyword id="KW-0963">Cytoplasm</keyword>
<keyword id="KW-0418">Kinase</keyword>
<keyword id="KW-0547">Nucleotide-binding</keyword>
<keyword id="KW-0808">Transferase</keyword>
<feature type="chain" id="PRO_1000048236" description="Cytidylate kinase">
    <location>
        <begin position="1"/>
        <end position="229"/>
    </location>
</feature>
<feature type="binding site" evidence="1">
    <location>
        <begin position="12"/>
        <end position="20"/>
    </location>
    <ligand>
        <name>ATP</name>
        <dbReference type="ChEBI" id="CHEBI:30616"/>
    </ligand>
</feature>
<protein>
    <recommendedName>
        <fullName evidence="1">Cytidylate kinase</fullName>
        <shortName evidence="1">CK</shortName>
        <ecNumber evidence="1">2.7.4.25</ecNumber>
    </recommendedName>
    <alternativeName>
        <fullName evidence="1">Cytidine monophosphate kinase</fullName>
        <shortName evidence="1">CMP kinase</shortName>
    </alternativeName>
</protein>
<gene>
    <name evidence="1" type="primary">cmk</name>
    <name type="ordered locus">MHP7448_0069</name>
</gene>
<comment type="catalytic activity">
    <reaction evidence="1">
        <text>CMP + ATP = CDP + ADP</text>
        <dbReference type="Rhea" id="RHEA:11600"/>
        <dbReference type="ChEBI" id="CHEBI:30616"/>
        <dbReference type="ChEBI" id="CHEBI:58069"/>
        <dbReference type="ChEBI" id="CHEBI:60377"/>
        <dbReference type="ChEBI" id="CHEBI:456216"/>
        <dbReference type="EC" id="2.7.4.25"/>
    </reaction>
</comment>
<comment type="catalytic activity">
    <reaction evidence="1">
        <text>dCMP + ATP = dCDP + ADP</text>
        <dbReference type="Rhea" id="RHEA:25094"/>
        <dbReference type="ChEBI" id="CHEBI:30616"/>
        <dbReference type="ChEBI" id="CHEBI:57566"/>
        <dbReference type="ChEBI" id="CHEBI:58593"/>
        <dbReference type="ChEBI" id="CHEBI:456216"/>
        <dbReference type="EC" id="2.7.4.25"/>
    </reaction>
</comment>
<comment type="subcellular location">
    <subcellularLocation>
        <location evidence="1">Cytoplasm</location>
    </subcellularLocation>
</comment>
<comment type="similarity">
    <text evidence="1">Belongs to the cytidylate kinase family. Type 1 subfamily.</text>
</comment>
<accession>Q4A8U3</accession>
<sequence length="229" mass="26504">MPFKKINIAIDGPSGVGKSTIAKQIANKFNYLFINTGSLYRAIAFFCQKNQISITSERKMIKHLPPNFLSLDFEGNVWLQNQNVSNLLRNDLISKNAAIIAQYPQIRKIVTEILQNFQKNHKGIIMEGRDTTYNVMPDADLKIFLWADAETRAKRRLKQNTFLNLETDFQEILKAIEHRDYLDMTRKTNPLKKTVDSIFLDTTNFTRDQIVSQISKLVFRKIGQFSLEI</sequence>
<dbReference type="EC" id="2.7.4.25" evidence="1"/>
<dbReference type="EMBL" id="AE017244">
    <property type="protein sequence ID" value="AAZ53446.1"/>
    <property type="molecule type" value="Genomic_DNA"/>
</dbReference>
<dbReference type="RefSeq" id="WP_011283885.1">
    <property type="nucleotide sequence ID" value="NC_007332.1"/>
</dbReference>
<dbReference type="SMR" id="Q4A8U3"/>
<dbReference type="GeneID" id="41334355"/>
<dbReference type="KEGG" id="mhp:MHP7448_0069"/>
<dbReference type="HOGENOM" id="CLU_079959_0_2_14"/>
<dbReference type="Proteomes" id="UP000000553">
    <property type="component" value="Chromosome"/>
</dbReference>
<dbReference type="GO" id="GO:0005737">
    <property type="term" value="C:cytoplasm"/>
    <property type="evidence" value="ECO:0007669"/>
    <property type="project" value="UniProtKB-SubCell"/>
</dbReference>
<dbReference type="GO" id="GO:0005524">
    <property type="term" value="F:ATP binding"/>
    <property type="evidence" value="ECO:0007669"/>
    <property type="project" value="UniProtKB-UniRule"/>
</dbReference>
<dbReference type="GO" id="GO:0036430">
    <property type="term" value="F:CMP kinase activity"/>
    <property type="evidence" value="ECO:0007669"/>
    <property type="project" value="RHEA"/>
</dbReference>
<dbReference type="GO" id="GO:0036431">
    <property type="term" value="F:dCMP kinase activity"/>
    <property type="evidence" value="ECO:0007669"/>
    <property type="project" value="RHEA"/>
</dbReference>
<dbReference type="GO" id="GO:0006220">
    <property type="term" value="P:pyrimidine nucleotide metabolic process"/>
    <property type="evidence" value="ECO:0007669"/>
    <property type="project" value="UniProtKB-UniRule"/>
</dbReference>
<dbReference type="CDD" id="cd02020">
    <property type="entry name" value="CMPK"/>
    <property type="match status" value="1"/>
</dbReference>
<dbReference type="Gene3D" id="3.40.50.300">
    <property type="entry name" value="P-loop containing nucleotide triphosphate hydrolases"/>
    <property type="match status" value="1"/>
</dbReference>
<dbReference type="HAMAP" id="MF_00238">
    <property type="entry name" value="Cytidyl_kinase_type1"/>
    <property type="match status" value="1"/>
</dbReference>
<dbReference type="InterPro" id="IPR003136">
    <property type="entry name" value="Cytidylate_kin"/>
</dbReference>
<dbReference type="InterPro" id="IPR011994">
    <property type="entry name" value="Cytidylate_kinase_dom"/>
</dbReference>
<dbReference type="InterPro" id="IPR027417">
    <property type="entry name" value="P-loop_NTPase"/>
</dbReference>
<dbReference type="NCBIfam" id="TIGR00017">
    <property type="entry name" value="cmk"/>
    <property type="match status" value="1"/>
</dbReference>
<dbReference type="Pfam" id="PF02224">
    <property type="entry name" value="Cytidylate_kin"/>
    <property type="match status" value="1"/>
</dbReference>
<dbReference type="SUPFAM" id="SSF52540">
    <property type="entry name" value="P-loop containing nucleoside triphosphate hydrolases"/>
    <property type="match status" value="1"/>
</dbReference>
<name>KCY_MESH7</name>
<evidence type="ECO:0000255" key="1">
    <source>
        <dbReference type="HAMAP-Rule" id="MF_00238"/>
    </source>
</evidence>
<proteinExistence type="inferred from homology"/>